<feature type="chain" id="PRO_0000214412" description="FAD assembly factor SdhE">
    <location>
        <begin position="1"/>
        <end position="84"/>
    </location>
</feature>
<accession>Q9I5G9</accession>
<evidence type="ECO:0000250" key="1">
    <source>
        <dbReference type="UniProtKB" id="G4V4G2"/>
    </source>
</evidence>
<evidence type="ECO:0000305" key="2"/>
<proteinExistence type="inferred from homology"/>
<protein>
    <recommendedName>
        <fullName>FAD assembly factor SdhE</fullName>
    </recommendedName>
</protein>
<gene>
    <name type="primary">sdhE</name>
    <name type="ordered locus">PA0760</name>
</gene>
<dbReference type="EMBL" id="AE004091">
    <property type="protein sequence ID" value="AAG04149.1"/>
    <property type="molecule type" value="Genomic_DNA"/>
</dbReference>
<dbReference type="PIR" id="H83549">
    <property type="entry name" value="H83549"/>
</dbReference>
<dbReference type="RefSeq" id="NP_249451.1">
    <property type="nucleotide sequence ID" value="NC_002516.2"/>
</dbReference>
<dbReference type="RefSeq" id="WP_003085532.1">
    <property type="nucleotide sequence ID" value="NZ_QZGE01000007.1"/>
</dbReference>
<dbReference type="SMR" id="Q9I5G9"/>
<dbReference type="FunCoup" id="Q9I5G9">
    <property type="interactions" value="117"/>
</dbReference>
<dbReference type="STRING" id="208964.PA0760"/>
<dbReference type="PaxDb" id="208964-PA0760"/>
<dbReference type="DNASU" id="880656"/>
<dbReference type="GeneID" id="880656"/>
<dbReference type="KEGG" id="pae:PA0760"/>
<dbReference type="PATRIC" id="fig|208964.12.peg.789"/>
<dbReference type="PseudoCAP" id="PA0760"/>
<dbReference type="HOGENOM" id="CLU_103054_2_2_6"/>
<dbReference type="InParanoid" id="Q9I5G9"/>
<dbReference type="OrthoDB" id="9180899at2"/>
<dbReference type="PhylomeDB" id="Q9I5G9"/>
<dbReference type="BioCyc" id="PAER208964:G1FZ6-773-MONOMER"/>
<dbReference type="Proteomes" id="UP000002438">
    <property type="component" value="Chromosome"/>
</dbReference>
<dbReference type="GO" id="GO:0005737">
    <property type="term" value="C:cytoplasm"/>
    <property type="evidence" value="ECO:0007669"/>
    <property type="project" value="UniProtKB-SubCell"/>
</dbReference>
<dbReference type="GO" id="GO:0006105">
    <property type="term" value="P:succinate metabolic process"/>
    <property type="evidence" value="ECO:0000318"/>
    <property type="project" value="GO_Central"/>
</dbReference>
<dbReference type="FunFam" id="1.10.150.250:FF:000001">
    <property type="entry name" value="FAD assembly factor SdhE"/>
    <property type="match status" value="1"/>
</dbReference>
<dbReference type="Gene3D" id="1.10.150.250">
    <property type="entry name" value="Flavinator of succinate dehydrogenase"/>
    <property type="match status" value="1"/>
</dbReference>
<dbReference type="InterPro" id="IPR005631">
    <property type="entry name" value="SDH"/>
</dbReference>
<dbReference type="InterPro" id="IPR036714">
    <property type="entry name" value="SDH_sf"/>
</dbReference>
<dbReference type="InterPro" id="IPR050531">
    <property type="entry name" value="SdhE_FAD_assembly_factor"/>
</dbReference>
<dbReference type="PANTHER" id="PTHR39585">
    <property type="entry name" value="FAD ASSEMBLY FACTOR SDHE"/>
    <property type="match status" value="1"/>
</dbReference>
<dbReference type="PANTHER" id="PTHR39585:SF1">
    <property type="entry name" value="FAD ASSEMBLY FACTOR SDHE"/>
    <property type="match status" value="1"/>
</dbReference>
<dbReference type="Pfam" id="PF03937">
    <property type="entry name" value="Sdh5"/>
    <property type="match status" value="1"/>
</dbReference>
<dbReference type="SUPFAM" id="SSF109910">
    <property type="entry name" value="YgfY-like"/>
    <property type="match status" value="1"/>
</dbReference>
<organism>
    <name type="scientific">Pseudomonas aeruginosa (strain ATCC 15692 / DSM 22644 / CIP 104116 / JCM 14847 / LMG 12228 / 1C / PRS 101 / PAO1)</name>
    <dbReference type="NCBI Taxonomy" id="208964"/>
    <lineage>
        <taxon>Bacteria</taxon>
        <taxon>Pseudomonadati</taxon>
        <taxon>Pseudomonadota</taxon>
        <taxon>Gammaproteobacteria</taxon>
        <taxon>Pseudomonadales</taxon>
        <taxon>Pseudomonadaceae</taxon>
        <taxon>Pseudomonas</taxon>
    </lineage>
</organism>
<keyword id="KW-0143">Chaperone</keyword>
<keyword id="KW-0963">Cytoplasm</keyword>
<keyword id="KW-1185">Reference proteome</keyword>
<comment type="function">
    <text evidence="1">An FAD assembly protein, which accelerates covalent attachment of the cofactor into other proteins. Plays an essential role in the assembly of succinate dehydrogenase (SDH, respiratory complex II), an enzyme complex that is a component of both the tricarboxylic acid cycle and the electron transport chain, and which couples the oxidation of succinate to fumarate with the reduction of ubiquinone (coenzyme Q) to ubiquinol. Required for flavinylation (covalent attachment of FAD) of the flavoprotein subunit SdhA of SDH and other flavinylated proteins as well.</text>
</comment>
<comment type="subcellular location">
    <subcellularLocation>
        <location evidence="1">Cytoplasm</location>
    </subcellularLocation>
</comment>
<comment type="similarity">
    <text evidence="2">Belongs to the SdhE FAD assembly factor family.</text>
</comment>
<name>SDHE_PSEAE</name>
<reference key="1">
    <citation type="journal article" date="2000" name="Nature">
        <title>Complete genome sequence of Pseudomonas aeruginosa PAO1, an opportunistic pathogen.</title>
        <authorList>
            <person name="Stover C.K."/>
            <person name="Pham X.-Q.T."/>
            <person name="Erwin A.L."/>
            <person name="Mizoguchi S.D."/>
            <person name="Warrener P."/>
            <person name="Hickey M.J."/>
            <person name="Brinkman F.S.L."/>
            <person name="Hufnagle W.O."/>
            <person name="Kowalik D.J."/>
            <person name="Lagrou M."/>
            <person name="Garber R.L."/>
            <person name="Goltry L."/>
            <person name="Tolentino E."/>
            <person name="Westbrock-Wadman S."/>
            <person name="Yuan Y."/>
            <person name="Brody L.L."/>
            <person name="Coulter S.N."/>
            <person name="Folger K.R."/>
            <person name="Kas A."/>
            <person name="Larbig K."/>
            <person name="Lim R.M."/>
            <person name="Smith K.A."/>
            <person name="Spencer D.H."/>
            <person name="Wong G.K.-S."/>
            <person name="Wu Z."/>
            <person name="Paulsen I.T."/>
            <person name="Reizer J."/>
            <person name="Saier M.H. Jr."/>
            <person name="Hancock R.E.W."/>
            <person name="Lory S."/>
            <person name="Olson M.V."/>
        </authorList>
    </citation>
    <scope>NUCLEOTIDE SEQUENCE [LARGE SCALE GENOMIC DNA]</scope>
    <source>
        <strain>ATCC 15692 / DSM 22644 / CIP 104116 / JCM 14847 / LMG 12228 / 1C / PRS 101 / PAO1</strain>
    </source>
</reference>
<sequence>MADETELKRLYWHSRRGMLELDVLLVPFVQEVYPGLDAEDQARFRKLLECEDQDMFGWFMQRGEPEDADLRRMVRMILDRVQPD</sequence>